<protein>
    <recommendedName>
        <fullName>Attacin-A</fullName>
    </recommendedName>
</protein>
<feature type="signal peptide" evidence="1">
    <location>
        <begin position="1"/>
        <end position="20"/>
    </location>
</feature>
<feature type="propeptide" id="PRO_0000004893" evidence="1">
    <location>
        <begin position="21"/>
        <end position="34"/>
    </location>
</feature>
<feature type="chain" id="PRO_0000004894" description="Attacin-A">
    <location>
        <begin position="35"/>
        <end position="224"/>
    </location>
</feature>
<feature type="sequence conflict" description="In Ref. 3; AAF58215." evidence="4" ref="3">
    <original>K</original>
    <variation>N</variation>
    <location>
        <position position="3"/>
    </location>
</feature>
<feature type="sequence conflict" description="In Ref. 3; AAF58215." evidence="4" ref="3">
    <location>
        <begin position="22"/>
        <end position="24"/>
    </location>
</feature>
<proteinExistence type="evidence at protein level"/>
<gene>
    <name type="primary">AttA</name>
    <name type="ORF">CG10146</name>
</gene>
<accession>P45884</accession>
<accession>Q9V750</accession>
<comment type="function">
    <text>Hemolymph antibacterial protein.</text>
</comment>
<comment type="subcellular location">
    <subcellularLocation>
        <location evidence="2">Secreted</location>
    </subcellularLocation>
</comment>
<comment type="tissue specificity">
    <text evidence="2">Hemolymph (at protein level).</text>
</comment>
<comment type="induction">
    <text evidence="2">By bacterial infection (at protein level).</text>
</comment>
<comment type="similarity">
    <text evidence="4">Belongs to the attacin/sarcotoxin-2 family.</text>
</comment>
<name>ATTA_DROME</name>
<keyword id="KW-0044">Antibiotic</keyword>
<keyword id="KW-0929">Antimicrobial</keyword>
<keyword id="KW-0165">Cleavage on pair of basic residues</keyword>
<keyword id="KW-0391">Immunity</keyword>
<keyword id="KW-0399">Innate immunity</keyword>
<keyword id="KW-1185">Reference proteome</keyword>
<keyword id="KW-0964">Secreted</keyword>
<keyword id="KW-0732">Signal</keyword>
<evidence type="ECO:0000255" key="1"/>
<evidence type="ECO:0000269" key="2">
    <source>
    </source>
</evidence>
<evidence type="ECO:0000303" key="3">
    <source>
    </source>
</evidence>
<evidence type="ECO:0000305" key="4"/>
<sequence length="224" mass="23239">MQKTSILIVALVALFAITEALPSLPTTGPIRVRRQVLGGSLTSNPAGGADARLDLTKGIGNPNHNVVGQVFAAGNTQSGPVTTGGTLAYNNAGHGASLTKTHTPGVKDVFQQEAHANLFNNGRHNLDAKVFASQNKLANGFEFQRNGAGLDYSHINGHGASLTHSNFPGIGQQLGLDGRANLWSSPNRATTLDLTGSASKWTSGPFANQKPNFGAGLGLSHHFG</sequence>
<reference key="1">
    <citation type="journal article" date="1995" name="Insect Biochem. Mol. Biol.">
        <title>Identification of early genes in the Drosophila immune response by PCR-based differential display: the Attacin A gene and the evolution of attacin-like proteins.</title>
        <authorList>
            <person name="Aasling B."/>
            <person name="Dushay M.S."/>
            <person name="Hultmark D."/>
        </authorList>
    </citation>
    <scope>NUCLEOTIDE SEQUENCE [GENOMIC DNA]</scope>
    <source>
        <strain>Canton-S</strain>
    </source>
</reference>
<reference key="2">
    <citation type="journal article" date="2000" name="Gene">
        <title>Two attacin antibacterial genes of Drosophila melanogaster.</title>
        <authorList>
            <person name="Dushay M.S."/>
            <person name="Roethele J.B."/>
            <person name="Chaverri J.M."/>
            <person name="Dulek D.E."/>
            <person name="Syed S.K."/>
            <person name="Kitami T."/>
            <person name="Eldon E.D."/>
        </authorList>
    </citation>
    <scope>NUCLEOTIDE SEQUENCE [GENOMIC DNA]</scope>
</reference>
<reference key="3">
    <citation type="journal article" date="2000" name="Science">
        <title>The genome sequence of Drosophila melanogaster.</title>
        <authorList>
            <person name="Adams M.D."/>
            <person name="Celniker S.E."/>
            <person name="Holt R.A."/>
            <person name="Evans C.A."/>
            <person name="Gocayne J.D."/>
            <person name="Amanatides P.G."/>
            <person name="Scherer S.E."/>
            <person name="Li P.W."/>
            <person name="Hoskins R.A."/>
            <person name="Galle R.F."/>
            <person name="George R.A."/>
            <person name="Lewis S.E."/>
            <person name="Richards S."/>
            <person name="Ashburner M."/>
            <person name="Henderson S.N."/>
            <person name="Sutton G.G."/>
            <person name="Wortman J.R."/>
            <person name="Yandell M.D."/>
            <person name="Zhang Q."/>
            <person name="Chen L.X."/>
            <person name="Brandon R.C."/>
            <person name="Rogers Y.-H.C."/>
            <person name="Blazej R.G."/>
            <person name="Champe M."/>
            <person name="Pfeiffer B.D."/>
            <person name="Wan K.H."/>
            <person name="Doyle C."/>
            <person name="Baxter E.G."/>
            <person name="Helt G."/>
            <person name="Nelson C.R."/>
            <person name="Miklos G.L.G."/>
            <person name="Abril J.F."/>
            <person name="Agbayani A."/>
            <person name="An H.-J."/>
            <person name="Andrews-Pfannkoch C."/>
            <person name="Baldwin D."/>
            <person name="Ballew R.M."/>
            <person name="Basu A."/>
            <person name="Baxendale J."/>
            <person name="Bayraktaroglu L."/>
            <person name="Beasley E.M."/>
            <person name="Beeson K.Y."/>
            <person name="Benos P.V."/>
            <person name="Berman B.P."/>
            <person name="Bhandari D."/>
            <person name="Bolshakov S."/>
            <person name="Borkova D."/>
            <person name="Botchan M.R."/>
            <person name="Bouck J."/>
            <person name="Brokstein P."/>
            <person name="Brottier P."/>
            <person name="Burtis K.C."/>
            <person name="Busam D.A."/>
            <person name="Butler H."/>
            <person name="Cadieu E."/>
            <person name="Center A."/>
            <person name="Chandra I."/>
            <person name="Cherry J.M."/>
            <person name="Cawley S."/>
            <person name="Dahlke C."/>
            <person name="Davenport L.B."/>
            <person name="Davies P."/>
            <person name="de Pablos B."/>
            <person name="Delcher A."/>
            <person name="Deng Z."/>
            <person name="Mays A.D."/>
            <person name="Dew I."/>
            <person name="Dietz S.M."/>
            <person name="Dodson K."/>
            <person name="Doup L.E."/>
            <person name="Downes M."/>
            <person name="Dugan-Rocha S."/>
            <person name="Dunkov B.C."/>
            <person name="Dunn P."/>
            <person name="Durbin K.J."/>
            <person name="Evangelista C.C."/>
            <person name="Ferraz C."/>
            <person name="Ferriera S."/>
            <person name="Fleischmann W."/>
            <person name="Fosler C."/>
            <person name="Gabrielian A.E."/>
            <person name="Garg N.S."/>
            <person name="Gelbart W.M."/>
            <person name="Glasser K."/>
            <person name="Glodek A."/>
            <person name="Gong F."/>
            <person name="Gorrell J.H."/>
            <person name="Gu Z."/>
            <person name="Guan P."/>
            <person name="Harris M."/>
            <person name="Harris N.L."/>
            <person name="Harvey D.A."/>
            <person name="Heiman T.J."/>
            <person name="Hernandez J.R."/>
            <person name="Houck J."/>
            <person name="Hostin D."/>
            <person name="Houston K.A."/>
            <person name="Howland T.J."/>
            <person name="Wei M.-H."/>
            <person name="Ibegwam C."/>
            <person name="Jalali M."/>
            <person name="Kalush F."/>
            <person name="Karpen G.H."/>
            <person name="Ke Z."/>
            <person name="Kennison J.A."/>
            <person name="Ketchum K.A."/>
            <person name="Kimmel B.E."/>
            <person name="Kodira C.D."/>
            <person name="Kraft C.L."/>
            <person name="Kravitz S."/>
            <person name="Kulp D."/>
            <person name="Lai Z."/>
            <person name="Lasko P."/>
            <person name="Lei Y."/>
            <person name="Levitsky A.A."/>
            <person name="Li J.H."/>
            <person name="Li Z."/>
            <person name="Liang Y."/>
            <person name="Lin X."/>
            <person name="Liu X."/>
            <person name="Mattei B."/>
            <person name="McIntosh T.C."/>
            <person name="McLeod M.P."/>
            <person name="McPherson D."/>
            <person name="Merkulov G."/>
            <person name="Milshina N.V."/>
            <person name="Mobarry C."/>
            <person name="Morris J."/>
            <person name="Moshrefi A."/>
            <person name="Mount S.M."/>
            <person name="Moy M."/>
            <person name="Murphy B."/>
            <person name="Murphy L."/>
            <person name="Muzny D.M."/>
            <person name="Nelson D.L."/>
            <person name="Nelson D.R."/>
            <person name="Nelson K.A."/>
            <person name="Nixon K."/>
            <person name="Nusskern D.R."/>
            <person name="Pacleb J.M."/>
            <person name="Palazzolo M."/>
            <person name="Pittman G.S."/>
            <person name="Pan S."/>
            <person name="Pollard J."/>
            <person name="Puri V."/>
            <person name="Reese M.G."/>
            <person name="Reinert K."/>
            <person name="Remington K."/>
            <person name="Saunders R.D.C."/>
            <person name="Scheeler F."/>
            <person name="Shen H."/>
            <person name="Shue B.C."/>
            <person name="Siden-Kiamos I."/>
            <person name="Simpson M."/>
            <person name="Skupski M.P."/>
            <person name="Smith T.J."/>
            <person name="Spier E."/>
            <person name="Spradling A.C."/>
            <person name="Stapleton M."/>
            <person name="Strong R."/>
            <person name="Sun E."/>
            <person name="Svirskas R."/>
            <person name="Tector C."/>
            <person name="Turner R."/>
            <person name="Venter E."/>
            <person name="Wang A.H."/>
            <person name="Wang X."/>
            <person name="Wang Z.-Y."/>
            <person name="Wassarman D.A."/>
            <person name="Weinstock G.M."/>
            <person name="Weissenbach J."/>
            <person name="Williams S.M."/>
            <person name="Woodage T."/>
            <person name="Worley K.C."/>
            <person name="Wu D."/>
            <person name="Yang S."/>
            <person name="Yao Q.A."/>
            <person name="Ye J."/>
            <person name="Yeh R.-F."/>
            <person name="Zaveri J.S."/>
            <person name="Zhan M."/>
            <person name="Zhang G."/>
            <person name="Zhao Q."/>
            <person name="Zheng L."/>
            <person name="Zheng X.H."/>
            <person name="Zhong F.N."/>
            <person name="Zhong W."/>
            <person name="Zhou X."/>
            <person name="Zhu S.C."/>
            <person name="Zhu X."/>
            <person name="Smith H.O."/>
            <person name="Gibbs R.A."/>
            <person name="Myers E.W."/>
            <person name="Rubin G.M."/>
            <person name="Venter J.C."/>
        </authorList>
    </citation>
    <scope>NUCLEOTIDE SEQUENCE [LARGE SCALE GENOMIC DNA]</scope>
    <source>
        <strain>Berkeley</strain>
    </source>
</reference>
<reference key="4">
    <citation type="journal article" date="2002" name="Genome Biol.">
        <title>Annotation of the Drosophila melanogaster euchromatic genome: a systematic review.</title>
        <authorList>
            <person name="Misra S."/>
            <person name="Crosby M.A."/>
            <person name="Mungall C.J."/>
            <person name="Matthews B.B."/>
            <person name="Campbell K.S."/>
            <person name="Hradecky P."/>
            <person name="Huang Y."/>
            <person name="Kaminker J.S."/>
            <person name="Millburn G.H."/>
            <person name="Prochnik S.E."/>
            <person name="Smith C.D."/>
            <person name="Tupy J.L."/>
            <person name="Whitfield E.J."/>
            <person name="Bayraktaroglu L."/>
            <person name="Berman B.P."/>
            <person name="Bettencourt B.R."/>
            <person name="Celniker S.E."/>
            <person name="de Grey A.D.N.J."/>
            <person name="Drysdale R.A."/>
            <person name="Harris N.L."/>
            <person name="Richter J."/>
            <person name="Russo S."/>
            <person name="Schroeder A.J."/>
            <person name="Shu S.Q."/>
            <person name="Stapleton M."/>
            <person name="Yamada C."/>
            <person name="Ashburner M."/>
            <person name="Gelbart W.M."/>
            <person name="Rubin G.M."/>
            <person name="Lewis S.E."/>
        </authorList>
    </citation>
    <scope>GENOME REANNOTATION</scope>
    <source>
        <strain>Berkeley</strain>
    </source>
</reference>
<reference key="5">
    <citation type="journal article" date="2006" name="J. Insect Physiol.">
        <title>Identification of new immune induced molecules in the haemolymph of Drosophila melanogaster by 2D-nanoLC MS/MS.</title>
        <authorList>
            <person name="Verleyen P."/>
            <person name="Baggerman G."/>
            <person name="D'Hertog W."/>
            <person name="Vierstraete E."/>
            <person name="Husson S.J."/>
            <person name="Schoofs L."/>
        </authorList>
    </citation>
    <scope>SUBCELLULAR LOCATION</scope>
    <scope>TISSUE SPECIFICITY</scope>
    <scope>INDUCTION BY BACTERIA</scope>
    <scope>IDENTIFICATION BY MASS SPECTROMETRY</scope>
    <source>
        <tissue evidence="3">Hemolymph</tissue>
    </source>
</reference>
<organism>
    <name type="scientific">Drosophila melanogaster</name>
    <name type="common">Fruit fly</name>
    <dbReference type="NCBI Taxonomy" id="7227"/>
    <lineage>
        <taxon>Eukaryota</taxon>
        <taxon>Metazoa</taxon>
        <taxon>Ecdysozoa</taxon>
        <taxon>Arthropoda</taxon>
        <taxon>Hexapoda</taxon>
        <taxon>Insecta</taxon>
        <taxon>Pterygota</taxon>
        <taxon>Neoptera</taxon>
        <taxon>Endopterygota</taxon>
        <taxon>Diptera</taxon>
        <taxon>Brachycera</taxon>
        <taxon>Muscomorpha</taxon>
        <taxon>Ephydroidea</taxon>
        <taxon>Drosophilidae</taxon>
        <taxon>Drosophila</taxon>
        <taxon>Sophophora</taxon>
    </lineage>
</organism>
<dbReference type="EMBL" id="Z46893">
    <property type="protein sequence ID" value="CAA86995.1"/>
    <property type="molecule type" value="Genomic_DNA"/>
</dbReference>
<dbReference type="EMBL" id="AF220544">
    <property type="protein sequence ID" value="AAF70455.1"/>
    <property type="molecule type" value="Genomic_DNA"/>
</dbReference>
<dbReference type="EMBL" id="AE013599">
    <property type="protein sequence ID" value="AAF58215.1"/>
    <property type="molecule type" value="Genomic_DNA"/>
</dbReference>
<dbReference type="RefSeq" id="NP_523745.1">
    <property type="nucleotide sequence ID" value="NM_079021.5"/>
</dbReference>
<dbReference type="FunCoup" id="P45884">
    <property type="interactions" value="29"/>
</dbReference>
<dbReference type="STRING" id="7227.FBpp0086567"/>
<dbReference type="TCDB" id="1.C.115.1.6">
    <property type="family name" value="the membrane-permeabilizing peptide, atticin (atticin) family"/>
</dbReference>
<dbReference type="PaxDb" id="7227-FBpp0086567"/>
<dbReference type="EnsemblMetazoa" id="FBtr0087437">
    <property type="protein sequence ID" value="FBpp0086567"/>
    <property type="gene ID" value="FBgn0012042"/>
</dbReference>
<dbReference type="GeneID" id="36636"/>
<dbReference type="KEGG" id="dme:Dmel_CG10146"/>
<dbReference type="AGR" id="FB:FBgn0012042"/>
<dbReference type="CTD" id="36636"/>
<dbReference type="FlyBase" id="FBgn0012042">
    <property type="gene designation" value="AttA"/>
</dbReference>
<dbReference type="VEuPathDB" id="VectorBase:FBgn0012042"/>
<dbReference type="eggNOG" id="ENOG502SZ31">
    <property type="taxonomic scope" value="Eukaryota"/>
</dbReference>
<dbReference type="HOGENOM" id="CLU_108645_0_0_1"/>
<dbReference type="InParanoid" id="P45884"/>
<dbReference type="OrthoDB" id="7441167at2759"/>
<dbReference type="PhylomeDB" id="P45884"/>
<dbReference type="BioGRID-ORCS" id="36636">
    <property type="hits" value="0 hits in 1 CRISPR screen"/>
</dbReference>
<dbReference type="GenomeRNAi" id="36636"/>
<dbReference type="PRO" id="PR:P45884"/>
<dbReference type="Proteomes" id="UP000000803">
    <property type="component" value="Chromosome 2R"/>
</dbReference>
<dbReference type="Bgee" id="FBgn0012042">
    <property type="expression patterns" value="Expressed in oviduct (Drosophila) and 27 other cell types or tissues"/>
</dbReference>
<dbReference type="ExpressionAtlas" id="P45884">
    <property type="expression patterns" value="baseline and differential"/>
</dbReference>
<dbReference type="GO" id="GO:0005615">
    <property type="term" value="C:extracellular space"/>
    <property type="evidence" value="ECO:0000314"/>
    <property type="project" value="FlyBase"/>
</dbReference>
<dbReference type="GO" id="GO:0019731">
    <property type="term" value="P:antibacterial humoral response"/>
    <property type="evidence" value="ECO:0000270"/>
    <property type="project" value="FlyBase"/>
</dbReference>
<dbReference type="GO" id="GO:0050829">
    <property type="term" value="P:defense response to Gram-negative bacterium"/>
    <property type="evidence" value="ECO:0000314"/>
    <property type="project" value="FlyBase"/>
</dbReference>
<dbReference type="GO" id="GO:0050830">
    <property type="term" value="P:defense response to Gram-positive bacterium"/>
    <property type="evidence" value="ECO:0000270"/>
    <property type="project" value="FlyBase"/>
</dbReference>
<dbReference type="GO" id="GO:0002213">
    <property type="term" value="P:defense response to insect"/>
    <property type="evidence" value="ECO:0000270"/>
    <property type="project" value="FlyBase"/>
</dbReference>
<dbReference type="GO" id="GO:0006959">
    <property type="term" value="P:humoral immune response"/>
    <property type="evidence" value="ECO:0000270"/>
    <property type="project" value="FlyBase"/>
</dbReference>
<dbReference type="GO" id="GO:0045087">
    <property type="term" value="P:innate immune response"/>
    <property type="evidence" value="ECO:0007669"/>
    <property type="project" value="UniProtKB-KW"/>
</dbReference>
<dbReference type="GO" id="GO:0055093">
    <property type="term" value="P:response to hyperoxia"/>
    <property type="evidence" value="ECO:0000315"/>
    <property type="project" value="FlyBase"/>
</dbReference>
<dbReference type="InterPro" id="IPR005521">
    <property type="entry name" value="Attacin_C"/>
</dbReference>
<dbReference type="InterPro" id="IPR005520">
    <property type="entry name" value="Attacin_N"/>
</dbReference>
<dbReference type="Pfam" id="PF03769">
    <property type="entry name" value="Attacin_C"/>
    <property type="match status" value="1"/>
</dbReference>
<dbReference type="Pfam" id="PF03768">
    <property type="entry name" value="Attacin_N"/>
    <property type="match status" value="1"/>
</dbReference>